<reference key="1">
    <citation type="journal article" date="1991" name="J. Biol. Chem.">
        <title>Yeast thioredoxin genes.</title>
        <authorList>
            <person name="Gan Z.-R."/>
        </authorList>
    </citation>
    <scope>NUCLEOTIDE SEQUENCE [GENOMIC DNA]</scope>
</reference>
<reference key="2">
    <citation type="journal article" date="1991" name="J. Biol. Chem.">
        <title>Thioredoxin deficiency in yeast prolongs S phase and shortens the G1 interval of the cell cycle.</title>
        <authorList>
            <person name="Muller E.G.D."/>
        </authorList>
    </citation>
    <scope>NUCLEOTIDE SEQUENCE [GENOMIC DNA]</scope>
</reference>
<reference key="3">
    <citation type="submission" date="1996-01" db="EMBL/GenBank/DDBJ databases">
        <title>Analysis of the 15.6-kb fragment encompassing the ADE3 gene.</title>
        <authorList>
            <person name="Song J.M."/>
            <person name="Cheung E."/>
            <person name="Rabinowitz J.C."/>
        </authorList>
    </citation>
    <scope>NUCLEOTIDE SEQUENCE [GENOMIC DNA]</scope>
    <source>
        <strain>S288c / GRF88</strain>
    </source>
</reference>
<reference key="4">
    <citation type="journal article" date="1996" name="Yeast">
        <title>Sequencing of a 17.6 kb segment on the right arm of yeast chromosome VII reveals 12 ORFs, including CCT, ADE3 and TR-I genes, homologues of the yeast PMT and EF1G genes, of the human and bacterial electron-transferring flavoproteins (beta-chain) and of the Escherichia coli phosphoserine phosphohydrolase, and five new ORFs.</title>
        <authorList>
            <person name="Guerreiro P."/>
            <person name="Barreiros T."/>
            <person name="Soares H."/>
            <person name="Cyrne L."/>
            <person name="Maia e Silva A."/>
            <person name="Rodrigues-Pousada C."/>
        </authorList>
    </citation>
    <scope>NUCLEOTIDE SEQUENCE [GENOMIC DNA]</scope>
    <source>
        <strain>ATCC 204508 / S288c</strain>
    </source>
</reference>
<reference key="5">
    <citation type="journal article" date="1997" name="Nature">
        <title>The nucleotide sequence of Saccharomyces cerevisiae chromosome VII.</title>
        <authorList>
            <person name="Tettelin H."/>
            <person name="Agostoni-Carbone M.L."/>
            <person name="Albermann K."/>
            <person name="Albers M."/>
            <person name="Arroyo J."/>
            <person name="Backes U."/>
            <person name="Barreiros T."/>
            <person name="Bertani I."/>
            <person name="Bjourson A.J."/>
            <person name="Brueckner M."/>
            <person name="Bruschi C.V."/>
            <person name="Carignani G."/>
            <person name="Castagnoli L."/>
            <person name="Cerdan E."/>
            <person name="Clemente M.L."/>
            <person name="Coblenz A."/>
            <person name="Coglievina M."/>
            <person name="Coissac E."/>
            <person name="Defoor E."/>
            <person name="Del Bino S."/>
            <person name="Delius H."/>
            <person name="Delneri D."/>
            <person name="de Wergifosse P."/>
            <person name="Dujon B."/>
            <person name="Durand P."/>
            <person name="Entian K.-D."/>
            <person name="Eraso P."/>
            <person name="Escribano V."/>
            <person name="Fabiani L."/>
            <person name="Fartmann B."/>
            <person name="Feroli F."/>
            <person name="Feuermann M."/>
            <person name="Frontali L."/>
            <person name="Garcia-Gonzalez M."/>
            <person name="Garcia-Saez M.I."/>
            <person name="Goffeau A."/>
            <person name="Guerreiro P."/>
            <person name="Hani J."/>
            <person name="Hansen M."/>
            <person name="Hebling U."/>
            <person name="Hernandez K."/>
            <person name="Heumann K."/>
            <person name="Hilger F."/>
            <person name="Hofmann B."/>
            <person name="Indge K.J."/>
            <person name="James C.M."/>
            <person name="Klima R."/>
            <person name="Koetter P."/>
            <person name="Kramer B."/>
            <person name="Kramer W."/>
            <person name="Lauquin G."/>
            <person name="Leuther H."/>
            <person name="Louis E.J."/>
            <person name="Maillier E."/>
            <person name="Marconi A."/>
            <person name="Martegani E."/>
            <person name="Mazon M.J."/>
            <person name="Mazzoni C."/>
            <person name="McReynolds A.D.K."/>
            <person name="Melchioretto P."/>
            <person name="Mewes H.-W."/>
            <person name="Minenkova O."/>
            <person name="Mueller-Auer S."/>
            <person name="Nawrocki A."/>
            <person name="Netter P."/>
            <person name="Neu R."/>
            <person name="Nombela C."/>
            <person name="Oliver S.G."/>
            <person name="Panzeri L."/>
            <person name="Paoluzi S."/>
            <person name="Plevani P."/>
            <person name="Portetelle D."/>
            <person name="Portillo F."/>
            <person name="Potier S."/>
            <person name="Purnelle B."/>
            <person name="Rieger M."/>
            <person name="Riles L."/>
            <person name="Rinaldi T."/>
            <person name="Robben J."/>
            <person name="Rodrigues-Pousada C."/>
            <person name="Rodriguez-Belmonte E."/>
            <person name="Rodriguez-Torres A.M."/>
            <person name="Rose M."/>
            <person name="Ruzzi M."/>
            <person name="Saliola M."/>
            <person name="Sanchez-Perez M."/>
            <person name="Schaefer B."/>
            <person name="Schaefer M."/>
            <person name="Scharfe M."/>
            <person name="Schmidheini T."/>
            <person name="Schreer A."/>
            <person name="Skala J."/>
            <person name="Souciet J.-L."/>
            <person name="Steensma H.Y."/>
            <person name="Talla E."/>
            <person name="Thierry A."/>
            <person name="Vandenbol M."/>
            <person name="van der Aart Q.J.M."/>
            <person name="Van Dyck L."/>
            <person name="Vanoni M."/>
            <person name="Verhasselt P."/>
            <person name="Voet M."/>
            <person name="Volckaert G."/>
            <person name="Wambutt R."/>
            <person name="Watson M.D."/>
            <person name="Weber N."/>
            <person name="Wedler E."/>
            <person name="Wedler H."/>
            <person name="Wipfli P."/>
            <person name="Wolf K."/>
            <person name="Wright L.F."/>
            <person name="Zaccaria P."/>
            <person name="Zimmermann M."/>
            <person name="Zollner A."/>
            <person name="Kleine K."/>
        </authorList>
    </citation>
    <scope>NUCLEOTIDE SEQUENCE [LARGE SCALE GENOMIC DNA]</scope>
    <source>
        <strain>ATCC 204508 / S288c</strain>
    </source>
</reference>
<reference key="6">
    <citation type="journal article" date="2014" name="G3 (Bethesda)">
        <title>The reference genome sequence of Saccharomyces cerevisiae: Then and now.</title>
        <authorList>
            <person name="Engel S.R."/>
            <person name="Dietrich F.S."/>
            <person name="Fisk D.G."/>
            <person name="Binkley G."/>
            <person name="Balakrishnan R."/>
            <person name="Costanzo M.C."/>
            <person name="Dwight S.S."/>
            <person name="Hitz B.C."/>
            <person name="Karra K."/>
            <person name="Nash R.S."/>
            <person name="Weng S."/>
            <person name="Wong E.D."/>
            <person name="Lloyd P."/>
            <person name="Skrzypek M.S."/>
            <person name="Miyasato S.R."/>
            <person name="Simison M."/>
            <person name="Cherry J.M."/>
        </authorList>
    </citation>
    <scope>GENOME REANNOTATION</scope>
    <source>
        <strain>ATCC 204508 / S288c</strain>
    </source>
</reference>
<reference key="7">
    <citation type="journal article" date="2007" name="Genome Res.">
        <title>Approaching a complete repository of sequence-verified protein-encoding clones for Saccharomyces cerevisiae.</title>
        <authorList>
            <person name="Hu Y."/>
            <person name="Rolfs A."/>
            <person name="Bhullar B."/>
            <person name="Murthy T.V.S."/>
            <person name="Zhu C."/>
            <person name="Berger M.F."/>
            <person name="Camargo A.A."/>
            <person name="Kelley F."/>
            <person name="McCarron S."/>
            <person name="Jepson D."/>
            <person name="Richardson A."/>
            <person name="Raphael J."/>
            <person name="Moreira D."/>
            <person name="Taycher E."/>
            <person name="Zuo D."/>
            <person name="Mohr S."/>
            <person name="Kane M.F."/>
            <person name="Williamson J."/>
            <person name="Simpson A.J.G."/>
            <person name="Bulyk M.L."/>
            <person name="Harlow E."/>
            <person name="Marsischky G."/>
            <person name="Kolodner R.D."/>
            <person name="LaBaer J."/>
        </authorList>
    </citation>
    <scope>NUCLEOTIDE SEQUENCE [GENOMIC DNA]</scope>
    <source>
        <strain>ATCC 204508 / S288c</strain>
    </source>
</reference>
<reference key="8">
    <citation type="journal article" date="1994" name="J. Biol. Chem.">
        <title>Thioredoxin-dependent peroxide reductase from yeast.</title>
        <authorList>
            <person name="Chae H.Z."/>
            <person name="Chung S.J."/>
            <person name="Rhee S.G."/>
        </authorList>
    </citation>
    <scope>PROTEIN SEQUENCE OF 2-13</scope>
    <scope>TSA1 DEPENDENCE ON THIOREDOXIN</scope>
    <source>
        <strain>ATCC 200358 / YNN 295</strain>
    </source>
</reference>
<reference key="9">
    <citation type="journal article" date="1971" name="Eur. J. Biochem.">
        <title>Yeast thioredoxin. Amino-acid sequence around the active-center disulfide of thioredoxin I and II.</title>
        <authorList>
            <person name="Hall D.E."/>
            <person name="Baldesten A."/>
            <person name="Holmgren A."/>
            <person name="Reichard P."/>
        </authorList>
    </citation>
    <scope>PROTEIN SEQUENCE OF 27-43</scope>
    <scope>REDOX-ACTIVE DISULFIDE BOND</scope>
</reference>
<reference key="10">
    <citation type="journal article" date="1988" name="Arch. Microbiol.">
        <title>Yeast PAPS reductase: properties and requirements of the purified enzyme.</title>
        <authorList>
            <person name="Schwenn J.D."/>
            <person name="Krone F.A."/>
            <person name="Husmann K."/>
        </authorList>
    </citation>
    <scope>FUNCTION</scope>
    <scope>SULFATE ASSIMILATION AND METHIONINE METABOLISM</scope>
</reference>
<reference key="11">
    <citation type="journal article" date="1997" name="J. Cell Biol.">
        <title>A heterodimer of thioredoxin and I(B)2 cooperates with Sec18p (NSF) to promote yeast vacuole inheritance.</title>
        <authorList>
            <person name="Xu Z."/>
            <person name="Mayer A."/>
            <person name="Muller E.G.D."/>
            <person name="Wickner W."/>
        </authorList>
    </citation>
    <scope>FUNCTION</scope>
    <scope>IDENTIFICATION IN THE LMA1 COMPLEX</scope>
</reference>
<reference key="12">
    <citation type="journal article" date="1998" name="Cell">
        <title>LMA1 binds to vacuoles at Sec18p (NSF), transfers upon ATP hydrolysis to a t-SNARE (Vam3p) complex, and is released during fusion.</title>
        <authorList>
            <person name="Xu Z."/>
            <person name="Sato K."/>
            <person name="Wickner W."/>
        </authorList>
    </citation>
    <scope>FUNCTION</scope>
    <scope>INTERACTION OF THE LMA1 COMPLEX WITH SEC18</scope>
</reference>
<reference key="13">
    <citation type="journal article" date="2000" name="J. Biol. Chem.">
        <title>Distinct physiological functions of thiol peroxidase isoenzymes in Saccharomyces cerevisiae.</title>
        <authorList>
            <person name="Park S.G."/>
            <person name="Cha M.-K."/>
            <person name="Jeong W."/>
            <person name="Kim I.-H."/>
        </authorList>
    </citation>
    <scope>FUNCTION</scope>
    <scope>DOT5 AND TSA2 DEPENDENCE ON THIOREDOXIN</scope>
</reference>
<reference key="14">
    <citation type="journal article" date="1999" name="J. Biol. Chem.">
        <title>A new antioxidant with alkyl hydroperoxide defense properties in yeast.</title>
        <authorList>
            <person name="Lee J."/>
            <person name="Spector D."/>
            <person name="Godon C."/>
            <person name="Labarre J."/>
            <person name="Toledano M.B."/>
        </authorList>
    </citation>
    <scope>FUNCTION</scope>
    <scope>REDUCTION OF AHP1</scope>
</reference>
<reference key="15">
    <citation type="journal article" date="2000" name="EMBO J.">
        <title>H2O2 sensing through oxidation of the Yap1 transcription factor.</title>
        <authorList>
            <person name="Delaunay A."/>
            <person name="Isnard A.D."/>
            <person name="Toledano M.B."/>
        </authorList>
    </citation>
    <scope>FUNCTION</scope>
    <scope>REGULATION OF YAP1</scope>
</reference>
<reference key="16">
    <citation type="journal article" date="2002" name="Cell">
        <title>A thiol peroxidase is an H2O2 receptor and redox-transducer in gene activation.</title>
        <authorList>
            <person name="Delaunay A."/>
            <person name="Pflieger D."/>
            <person name="Barrault M.-B."/>
            <person name="Vinh J."/>
            <person name="Toledano M.B."/>
        </authorList>
    </citation>
    <scope>FUNCTION</scope>
    <scope>REGULATION OF HYR1/GPX3</scope>
</reference>
<reference key="17">
    <citation type="journal article" date="2002" name="Mol. Microbiol.">
        <title>Thioredoxins are required for protection against a reductive stress in the yeast Saccharomyces cerevisiae.</title>
        <authorList>
            <person name="Trotter E.W."/>
            <person name="Grant C.M."/>
        </authorList>
    </citation>
    <scope>FUNCTION</scope>
    <scope>PROTECTION AGAINST REDUCING STRESS</scope>
</reference>
<reference key="18">
    <citation type="journal article" date="2000" name="Annu. Rev. Microbiol.">
        <title>Roles of the glutathione- and thioredoxin-dependent reduction systems in the Escherichia coli and Saccharomyces cerevisiae responses to oxidative stress.</title>
        <authorList>
            <person name="Carmel-Harel O."/>
            <person name="Storz G."/>
        </authorList>
    </citation>
    <scope>REVIEW</scope>
    <scope>OXIDATIVE STRESS</scope>
</reference>
<reference key="19">
    <citation type="journal article" date="2001" name="Mol. Microbiol.">
        <title>Role of the glutathione/glutaredoxin and thioredoxin systems in yeast growth and response to stress conditions.</title>
        <authorList>
            <person name="Grant C.M."/>
        </authorList>
    </citation>
    <scope>REVIEW</scope>
</reference>
<reference key="20">
    <citation type="journal article" date="2003" name="Biochim. Biophys. Acta">
        <title>Involvement of LMA1 and GATE-16 family members in intracellular membrane dynamics.</title>
        <authorList>
            <person name="Elazar Z."/>
            <person name="Scherz-Shouval R."/>
            <person name="Shorer H."/>
        </authorList>
    </citation>
    <scope>REVIEW</scope>
    <scope>FUNCTION OF THE LMA1 COMPLEX IN VESICLE FUSION</scope>
</reference>
<reference key="21">
    <citation type="journal article" date="2003" name="Nature">
        <title>Global analysis of protein localization in budding yeast.</title>
        <authorList>
            <person name="Huh W.-K."/>
            <person name="Falvo J.V."/>
            <person name="Gerke L.C."/>
            <person name="Carroll A.S."/>
            <person name="Howson R.W."/>
            <person name="Weissman J.S."/>
            <person name="O'Shea E.K."/>
        </authorList>
    </citation>
    <scope>SUBCELLULAR LOCATION [LARGE SCALE ANALYSIS]</scope>
</reference>
<reference key="22">
    <citation type="journal article" date="2003" name="Nature">
        <title>Global analysis of protein expression in yeast.</title>
        <authorList>
            <person name="Ghaemmaghami S."/>
            <person name="Huh W.-K."/>
            <person name="Bower K."/>
            <person name="Howson R.W."/>
            <person name="Belle A."/>
            <person name="Dephoure N."/>
            <person name="O'Shea E.K."/>
            <person name="Weissman J.S."/>
        </authorList>
    </citation>
    <scope>LEVEL OF PROTEIN EXPRESSION [LARGE SCALE ANALYSIS]</scope>
</reference>
<reference key="23">
    <citation type="journal article" date="2008" name="Mol. Cell. Proteomics">
        <title>A multidimensional chromatography technology for in-depth phosphoproteome analysis.</title>
        <authorList>
            <person name="Albuquerque C.P."/>
            <person name="Smolka M.B."/>
            <person name="Payne S.H."/>
            <person name="Bafna V."/>
            <person name="Eng J."/>
            <person name="Zhou H."/>
        </authorList>
    </citation>
    <scope>PHOSPHORYLATION [LARGE SCALE ANALYSIS] AT SER-62</scope>
    <scope>IDENTIFICATION BY MASS SPECTROMETRY [LARGE SCALE ANALYSIS]</scope>
</reference>
<reference key="24">
    <citation type="journal article" date="2009" name="Science">
        <title>Global analysis of Cdk1 substrate phosphorylation sites provides insights into evolution.</title>
        <authorList>
            <person name="Holt L.J."/>
            <person name="Tuch B.B."/>
            <person name="Villen J."/>
            <person name="Johnson A.D."/>
            <person name="Gygi S.P."/>
            <person name="Morgan D.O."/>
        </authorList>
    </citation>
    <scope>PHOSPHORYLATION [LARGE SCALE ANALYSIS] AT SER-62</scope>
    <scope>IDENTIFICATION BY MASS SPECTROMETRY [LARGE SCALE ANALYSIS]</scope>
</reference>
<reference key="25">
    <citation type="journal article" date="2012" name="Proteomics">
        <title>Sites of ubiquitin attachment in Saccharomyces cerevisiae.</title>
        <authorList>
            <person name="Starita L.M."/>
            <person name="Lo R.S."/>
            <person name="Eng J.K."/>
            <person name="von Haller P.D."/>
            <person name="Fields S."/>
        </authorList>
    </citation>
    <scope>UBIQUITINATION [LARGE SCALE ANALYSIS] AT LYS-67 AND LYS-97</scope>
    <scope>IDENTIFICATION BY MASS SPECTROMETRY [LARGE SCALE ANALYSIS]</scope>
</reference>
<reference key="26">
    <citation type="journal article" date="2007" name="Proteins">
        <title>Crystal structure of the yeast cytoplasmic thioredoxin Trx2.</title>
        <authorList>
            <person name="Bao R."/>
            <person name="Chen Y."/>
            <person name="Tang Y.-J."/>
            <person name="Janin J."/>
            <person name="Zhou C.-Z."/>
        </authorList>
    </citation>
    <scope>X-RAY CRYSTALLOGRAPHY (2.38 ANGSTROMS)</scope>
    <scope>DISULFIDE BOND</scope>
    <scope>SUBUNIT</scope>
</reference>
<keyword id="KW-0002">3D-structure</keyword>
<keyword id="KW-0963">Cytoplasm</keyword>
<keyword id="KW-0215">Deoxyribonucleotide synthesis</keyword>
<keyword id="KW-0903">Direct protein sequencing</keyword>
<keyword id="KW-1015">Disulfide bond</keyword>
<keyword id="KW-0249">Electron transport</keyword>
<keyword id="KW-0333">Golgi apparatus</keyword>
<keyword id="KW-1017">Isopeptide bond</keyword>
<keyword id="KW-0472">Membrane</keyword>
<keyword id="KW-0539">Nucleus</keyword>
<keyword id="KW-0597">Phosphoprotein</keyword>
<keyword id="KW-0653">Protein transport</keyword>
<keyword id="KW-0676">Redox-active center</keyword>
<keyword id="KW-1185">Reference proteome</keyword>
<keyword id="KW-0813">Transport</keyword>
<keyword id="KW-0832">Ubl conjugation</keyword>
<sequence length="104" mass="11204">MVTQLKSASEYDSALASGDKLVVVDFFATWCGPCKMIAPMIEKFAEQYSDAAFYKLDVDEVSDVAQKAEVSSMPTLIFYKGGKEVTRVVGANPAAIKQAIASNV</sequence>
<evidence type="ECO:0000255" key="1">
    <source>
        <dbReference type="PROSITE-ProRule" id="PRU00691"/>
    </source>
</evidence>
<evidence type="ECO:0000269" key="2">
    <source>
    </source>
</evidence>
<evidence type="ECO:0000269" key="3">
    <source>
    </source>
</evidence>
<evidence type="ECO:0000269" key="4">
    <source>
    </source>
</evidence>
<evidence type="ECO:0000269" key="5">
    <source>
    </source>
</evidence>
<evidence type="ECO:0000269" key="6">
    <source>
    </source>
</evidence>
<evidence type="ECO:0000269" key="7">
    <source>
    </source>
</evidence>
<evidence type="ECO:0000269" key="8">
    <source>
    </source>
</evidence>
<evidence type="ECO:0000269" key="9">
    <source>
    </source>
</evidence>
<evidence type="ECO:0000269" key="10">
    <source>
    </source>
</evidence>
<evidence type="ECO:0000269" key="11">
    <source>
    </source>
</evidence>
<evidence type="ECO:0000269" key="12">
    <source>
    </source>
</evidence>
<evidence type="ECO:0000269" key="13">
    <source>
    </source>
</evidence>
<evidence type="ECO:0000269" key="14">
    <source>
    </source>
</evidence>
<evidence type="ECO:0000305" key="15"/>
<evidence type="ECO:0007744" key="16">
    <source>
    </source>
</evidence>
<evidence type="ECO:0007744" key="17">
    <source>
    </source>
</evidence>
<evidence type="ECO:0007744" key="18">
    <source>
    </source>
</evidence>
<evidence type="ECO:0007829" key="19">
    <source>
        <dbReference type="PDB" id="4DSS"/>
    </source>
</evidence>
<gene>
    <name type="primary">TRX2</name>
    <name type="synonym">TRX1</name>
    <name type="ordered locus">YGR209C</name>
    <name type="ORF">G7746</name>
</gene>
<protein>
    <recommendedName>
        <fullName>Thioredoxin-2</fullName>
    </recommendedName>
    <alternativeName>
        <fullName>Thioredoxin II</fullName>
        <shortName>TR-II</shortName>
    </alternativeName>
    <alternativeName>
        <fullName>Thioredoxin-1</fullName>
    </alternativeName>
</protein>
<accession>P22803</accession>
<accession>D6VUZ2</accession>
<comment type="function">
    <text evidence="2 3 4 5 6 10 12 13 14">Participates as a hydrogen donor in redox reactions through the reversible oxidation of its active center dithiol to a disulfide, accompanied by the transfer of 2 electrons and 2 protons. It is involved in many cellular processes, including deoxyribonucleotide synthesis, repair of oxidatively damaged proteins, protein folding, sulfur metabolism, and redox homeostasis. Thioredoxin-dependent enzymes include phosphoadenosine-phosphosulfate reductase MET16, alkyl-hydroperoxide reductase DOT5, thioredoxin peroxidases TSA1 and TSA2, alkyl hydroperoxide reductase AHP1, and peroxiredoxin HYR1. Thioredoxin is also involved in protection against reducing stress. As part of the LMA1 complex, it is involved in the facilitation of vesicle fusion such as homotypic vacuole and ER-derived COPII vesicle fusion with the Golgi. This activity does not require the redox mechanism. Through its capacity to inactivate the stress response transcription factor YAP1 and its regulator the hydroperoxide stress sensor HYR1, it is involved in feedback regulation of stress response gene expression upon oxidative stress.</text>
</comment>
<comment type="subunit">
    <text evidence="9 12 13">Monomer. Part of the heterodimeric LMA1 complex together with the proteinase inhibitor PBI2. LMA1 binds to the ATPase SEC18.</text>
</comment>
<comment type="interaction">
    <interactant intactId="EBI-19598">
        <id>P22803</id>
    </interactant>
    <interactant intactId="EBI-19607">
        <id>P22217</id>
        <label>TRX1</label>
    </interactant>
    <organismsDiffer>false</organismsDiffer>
    <experiments>3</experiments>
</comment>
<comment type="subcellular location">
    <subcellularLocation>
        <location evidence="7">Cytoplasm</location>
    </subcellularLocation>
    <subcellularLocation>
        <location evidence="7">Golgi apparatus membrane</location>
        <topology evidence="7">Peripheral membrane protein</topology>
    </subcellularLocation>
    <subcellularLocation>
        <location evidence="7">Nucleus</location>
    </subcellularLocation>
</comment>
<comment type="induction">
    <text>Strongly induced by hydrogen peroxide and diamide stress in a YAP1- and SKN7-dependent manner. Also induced by reducing stress by DTT.</text>
</comment>
<comment type="PTM">
    <text>Reversible disulfide bond formation between Cys-31 and Cys-34, reverted by thioredoxin reductase TRR1 using NADPH as hydrogen donor.</text>
</comment>
<comment type="miscellaneous">
    <text evidence="8">Present with 17237 molecules/cell in log phase SD medium.</text>
</comment>
<comment type="miscellaneous">
    <text>Yeast has two cytoplasmic thioredoxins, TRX1 and TRX2, and one mitochondrial, TRX3.</text>
</comment>
<comment type="similarity">
    <text evidence="15">Belongs to the thioredoxin family.</text>
</comment>
<dbReference type="EMBL" id="M59168">
    <property type="protein sequence ID" value="AAA35170.1"/>
    <property type="molecule type" value="Genomic_DNA"/>
</dbReference>
<dbReference type="EMBL" id="M62648">
    <property type="protein sequence ID" value="AAA35178.1"/>
    <property type="molecule type" value="Genomic_DNA"/>
</dbReference>
<dbReference type="EMBL" id="U40843">
    <property type="protein sequence ID" value="AAA85584.1"/>
    <property type="molecule type" value="Genomic_DNA"/>
</dbReference>
<dbReference type="EMBL" id="Z49133">
    <property type="protein sequence ID" value="CAA89002.1"/>
    <property type="molecule type" value="Genomic_DNA"/>
</dbReference>
<dbReference type="EMBL" id="Z72994">
    <property type="protein sequence ID" value="CAA97236.1"/>
    <property type="molecule type" value="Genomic_DNA"/>
</dbReference>
<dbReference type="EMBL" id="AY557817">
    <property type="protein sequence ID" value="AAS56143.1"/>
    <property type="molecule type" value="Genomic_DNA"/>
</dbReference>
<dbReference type="EMBL" id="BK006941">
    <property type="protein sequence ID" value="DAA08303.1"/>
    <property type="molecule type" value="Genomic_DNA"/>
</dbReference>
<dbReference type="PIR" id="S15049">
    <property type="entry name" value="TXBY1"/>
</dbReference>
<dbReference type="RefSeq" id="NP_011725.3">
    <property type="nucleotide sequence ID" value="NM_001181338.3"/>
</dbReference>
<dbReference type="PDB" id="2FA4">
    <property type="method" value="X-ray"/>
    <property type="resolution" value="2.38 A"/>
    <property type="chains" value="A/B=1-104"/>
</dbReference>
<dbReference type="PDB" id="2HSY">
    <property type="method" value="NMR"/>
    <property type="chains" value="A=1-104"/>
</dbReference>
<dbReference type="PDB" id="3PIN">
    <property type="method" value="X-ray"/>
    <property type="resolution" value="2.70 A"/>
    <property type="chains" value="A=1-104"/>
</dbReference>
<dbReference type="PDB" id="4DSS">
    <property type="method" value="X-ray"/>
    <property type="resolution" value="2.10 A"/>
    <property type="chains" value="B=1-104"/>
</dbReference>
<dbReference type="PDB" id="7BVV">
    <property type="method" value="X-ray"/>
    <property type="resolution" value="2.12 A"/>
    <property type="chains" value="B=1-104"/>
</dbReference>
<dbReference type="PDBsum" id="2FA4"/>
<dbReference type="PDBsum" id="2HSY"/>
<dbReference type="PDBsum" id="3PIN"/>
<dbReference type="PDBsum" id="4DSS"/>
<dbReference type="PDBsum" id="7BVV"/>
<dbReference type="BMRB" id="P22803"/>
<dbReference type="SMR" id="P22803"/>
<dbReference type="BioGRID" id="33462">
    <property type="interactions" value="212"/>
</dbReference>
<dbReference type="ComplexPortal" id="CPX-1279">
    <property type="entry name" value="LMA1 complex, TRX2 variant"/>
</dbReference>
<dbReference type="DIP" id="DIP-5552N"/>
<dbReference type="FunCoup" id="P22803">
    <property type="interactions" value="759"/>
</dbReference>
<dbReference type="IntAct" id="P22803">
    <property type="interactions" value="18"/>
</dbReference>
<dbReference type="MINT" id="P22803"/>
<dbReference type="STRING" id="4932.YGR209C"/>
<dbReference type="CarbonylDB" id="P22803"/>
<dbReference type="iPTMnet" id="P22803"/>
<dbReference type="PaxDb" id="4932-YGR209C"/>
<dbReference type="PeptideAtlas" id="P22803"/>
<dbReference type="TopDownProteomics" id="P22803"/>
<dbReference type="EnsemblFungi" id="YGR209C_mRNA">
    <property type="protein sequence ID" value="YGR209C"/>
    <property type="gene ID" value="YGR209C"/>
</dbReference>
<dbReference type="GeneID" id="853123"/>
<dbReference type="KEGG" id="sce:YGR209C"/>
<dbReference type="AGR" id="SGD:S000003441"/>
<dbReference type="SGD" id="S000003441">
    <property type="gene designation" value="TRX2"/>
</dbReference>
<dbReference type="VEuPathDB" id="FungiDB:YGR209C"/>
<dbReference type="eggNOG" id="KOG0907">
    <property type="taxonomic scope" value="Eukaryota"/>
</dbReference>
<dbReference type="GeneTree" id="ENSGT00940000156170"/>
<dbReference type="HOGENOM" id="CLU_090389_14_0_1"/>
<dbReference type="InParanoid" id="P22803"/>
<dbReference type="OMA" id="WCIPSVF"/>
<dbReference type="OrthoDB" id="10263751at2759"/>
<dbReference type="BioCyc" id="YEAST:MONOMER3O-68"/>
<dbReference type="Reactome" id="R-SCE-2559580">
    <property type="pathway name" value="Oxidative Stress Induced Senescence"/>
</dbReference>
<dbReference type="Reactome" id="R-SCE-3299685">
    <property type="pathway name" value="Detoxification of Reactive Oxygen Species"/>
</dbReference>
<dbReference type="Reactome" id="R-SCE-499943">
    <property type="pathway name" value="Interconversion of nucleotide di- and triphosphates"/>
</dbReference>
<dbReference type="Reactome" id="R-SCE-5628897">
    <property type="pathway name" value="TP53 Regulates Metabolic Genes"/>
</dbReference>
<dbReference type="Reactome" id="R-SCE-844456">
    <property type="pathway name" value="The NLRP3 inflammasome"/>
</dbReference>
<dbReference type="BioGRID-ORCS" id="853123">
    <property type="hits" value="0 hits in 10 CRISPR screens"/>
</dbReference>
<dbReference type="EvolutionaryTrace" id="P22803"/>
<dbReference type="PRO" id="PR:P22803"/>
<dbReference type="Proteomes" id="UP000002311">
    <property type="component" value="Chromosome VII"/>
</dbReference>
<dbReference type="RNAct" id="P22803">
    <property type="molecule type" value="protein"/>
</dbReference>
<dbReference type="GO" id="GO:0005737">
    <property type="term" value="C:cytoplasm"/>
    <property type="evidence" value="ECO:0000303"/>
    <property type="project" value="ComplexPortal"/>
</dbReference>
<dbReference type="GO" id="GO:0005829">
    <property type="term" value="C:cytosol"/>
    <property type="evidence" value="ECO:0000314"/>
    <property type="project" value="SGD"/>
</dbReference>
<dbReference type="GO" id="GO:0000324">
    <property type="term" value="C:fungal-type vacuole"/>
    <property type="evidence" value="ECO:0000303"/>
    <property type="project" value="ComplexPortal"/>
</dbReference>
<dbReference type="GO" id="GO:0000139">
    <property type="term" value="C:Golgi membrane"/>
    <property type="evidence" value="ECO:0007669"/>
    <property type="project" value="UniProtKB-SubCell"/>
</dbReference>
<dbReference type="GO" id="GO:0120124">
    <property type="term" value="C:membrane fusion priming complex"/>
    <property type="evidence" value="ECO:0000303"/>
    <property type="project" value="ComplexPortal"/>
</dbReference>
<dbReference type="GO" id="GO:0005634">
    <property type="term" value="C:nucleus"/>
    <property type="evidence" value="ECO:0007669"/>
    <property type="project" value="UniProtKB-SubCell"/>
</dbReference>
<dbReference type="GO" id="GO:0015036">
    <property type="term" value="F:disulfide oxidoreductase activity"/>
    <property type="evidence" value="ECO:0000250"/>
    <property type="project" value="SGD"/>
</dbReference>
<dbReference type="GO" id="GO:0015035">
    <property type="term" value="F:protein-disulfide reductase activity"/>
    <property type="evidence" value="ECO:0007669"/>
    <property type="project" value="InterPro"/>
</dbReference>
<dbReference type="GO" id="GO:0045454">
    <property type="term" value="P:cell redox homeostasis"/>
    <property type="evidence" value="ECO:0000316"/>
    <property type="project" value="SGD"/>
</dbReference>
<dbReference type="GO" id="GO:0009263">
    <property type="term" value="P:deoxyribonucleotide biosynthetic process"/>
    <property type="evidence" value="ECO:0007669"/>
    <property type="project" value="UniProtKB-KW"/>
</dbReference>
<dbReference type="GO" id="GO:0006888">
    <property type="term" value="P:endoplasmic reticulum to Golgi vesicle-mediated transport"/>
    <property type="evidence" value="ECO:0000314"/>
    <property type="project" value="SGD"/>
</dbReference>
<dbReference type="GO" id="GO:0006749">
    <property type="term" value="P:glutathione metabolic process"/>
    <property type="evidence" value="ECO:0000316"/>
    <property type="project" value="SGD"/>
</dbReference>
<dbReference type="GO" id="GO:0015031">
    <property type="term" value="P:protein transport"/>
    <property type="evidence" value="ECO:0007669"/>
    <property type="project" value="UniProtKB-KW"/>
</dbReference>
<dbReference type="GO" id="GO:0006890">
    <property type="term" value="P:retrograde vesicle-mediated transport, Golgi to endoplasmic reticulum"/>
    <property type="evidence" value="ECO:0000314"/>
    <property type="project" value="SGD"/>
</dbReference>
<dbReference type="GO" id="GO:0000103">
    <property type="term" value="P:sulfate assimilation"/>
    <property type="evidence" value="ECO:0000316"/>
    <property type="project" value="SGD"/>
</dbReference>
<dbReference type="GO" id="GO:0042144">
    <property type="term" value="P:vacuole fusion, non-autophagic"/>
    <property type="evidence" value="ECO:0000314"/>
    <property type="project" value="SGD"/>
</dbReference>
<dbReference type="GO" id="GO:0000011">
    <property type="term" value="P:vacuole inheritance"/>
    <property type="evidence" value="ECO:0000315"/>
    <property type="project" value="SGD"/>
</dbReference>
<dbReference type="CDD" id="cd02947">
    <property type="entry name" value="TRX_family"/>
    <property type="match status" value="1"/>
</dbReference>
<dbReference type="FunFam" id="3.40.30.10:FF:000104">
    <property type="entry name" value="Thioredoxin"/>
    <property type="match status" value="1"/>
</dbReference>
<dbReference type="Gene3D" id="3.40.30.10">
    <property type="entry name" value="Glutaredoxin"/>
    <property type="match status" value="1"/>
</dbReference>
<dbReference type="InterPro" id="IPR005746">
    <property type="entry name" value="Thioredoxin"/>
</dbReference>
<dbReference type="InterPro" id="IPR036249">
    <property type="entry name" value="Thioredoxin-like_sf"/>
</dbReference>
<dbReference type="InterPro" id="IPR017937">
    <property type="entry name" value="Thioredoxin_CS"/>
</dbReference>
<dbReference type="InterPro" id="IPR013766">
    <property type="entry name" value="Thioredoxin_domain"/>
</dbReference>
<dbReference type="NCBIfam" id="TIGR01068">
    <property type="entry name" value="thioredoxin"/>
    <property type="match status" value="1"/>
</dbReference>
<dbReference type="PANTHER" id="PTHR46115">
    <property type="entry name" value="THIOREDOXIN-LIKE PROTEIN 1"/>
    <property type="match status" value="1"/>
</dbReference>
<dbReference type="Pfam" id="PF00085">
    <property type="entry name" value="Thioredoxin"/>
    <property type="match status" value="1"/>
</dbReference>
<dbReference type="PIRSF" id="PIRSF000077">
    <property type="entry name" value="Thioredoxin"/>
    <property type="match status" value="1"/>
</dbReference>
<dbReference type="PRINTS" id="PR00421">
    <property type="entry name" value="THIOREDOXIN"/>
</dbReference>
<dbReference type="SUPFAM" id="SSF52833">
    <property type="entry name" value="Thioredoxin-like"/>
    <property type="match status" value="1"/>
</dbReference>
<dbReference type="PROSITE" id="PS00194">
    <property type="entry name" value="THIOREDOXIN_1"/>
    <property type="match status" value="1"/>
</dbReference>
<dbReference type="PROSITE" id="PS51352">
    <property type="entry name" value="THIOREDOXIN_2"/>
    <property type="match status" value="1"/>
</dbReference>
<organism>
    <name type="scientific">Saccharomyces cerevisiae (strain ATCC 204508 / S288c)</name>
    <name type="common">Baker's yeast</name>
    <dbReference type="NCBI Taxonomy" id="559292"/>
    <lineage>
        <taxon>Eukaryota</taxon>
        <taxon>Fungi</taxon>
        <taxon>Dikarya</taxon>
        <taxon>Ascomycota</taxon>
        <taxon>Saccharomycotina</taxon>
        <taxon>Saccharomycetes</taxon>
        <taxon>Saccharomycetales</taxon>
        <taxon>Saccharomycetaceae</taxon>
        <taxon>Saccharomyces</taxon>
    </lineage>
</organism>
<feature type="initiator methionine" description="Removed" evidence="11">
    <location>
        <position position="1"/>
    </location>
</feature>
<feature type="chain" id="PRO_0000120045" description="Thioredoxin-2">
    <location>
        <begin position="2"/>
        <end position="104"/>
    </location>
</feature>
<feature type="domain" description="Thioredoxin" evidence="1">
    <location>
        <begin position="2"/>
        <end position="104"/>
    </location>
</feature>
<feature type="active site" description="Nucleophile">
    <location>
        <position position="31"/>
    </location>
</feature>
<feature type="active site" description="Nucleophile">
    <location>
        <position position="34"/>
    </location>
</feature>
<feature type="site" description="Deprotonates C-terminal active site Cys">
    <location>
        <position position="25"/>
    </location>
</feature>
<feature type="site" description="Contributes to redox potential value">
    <location>
        <position position="32"/>
    </location>
</feature>
<feature type="site" description="Contributes to redox potential value">
    <location>
        <position position="33"/>
    </location>
</feature>
<feature type="modified residue" description="Phosphoserine" evidence="16 17">
    <location>
        <position position="62"/>
    </location>
</feature>
<feature type="disulfide bond" description="Redox-active" evidence="1 9">
    <location>
        <begin position="31"/>
        <end position="34"/>
    </location>
</feature>
<feature type="cross-link" description="Glycyl lysine isopeptide (Lys-Gly) (interchain with G-Cter in ubiquitin)" evidence="18">
    <location>
        <position position="67"/>
    </location>
</feature>
<feature type="cross-link" description="Glycyl lysine isopeptide (Lys-Gly) (interchain with G-Cter in ubiquitin)" evidence="18">
    <location>
        <position position="97"/>
    </location>
</feature>
<feature type="strand" evidence="19">
    <location>
        <begin position="3"/>
        <end position="5"/>
    </location>
</feature>
<feature type="helix" evidence="19">
    <location>
        <begin position="8"/>
        <end position="15"/>
    </location>
</feature>
<feature type="strand" evidence="19">
    <location>
        <begin position="19"/>
        <end position="27"/>
    </location>
</feature>
<feature type="helix" evidence="19">
    <location>
        <begin position="32"/>
        <end position="47"/>
    </location>
</feature>
<feature type="strand" evidence="19">
    <location>
        <begin position="51"/>
        <end position="57"/>
    </location>
</feature>
<feature type="turn" evidence="19">
    <location>
        <begin position="58"/>
        <end position="60"/>
    </location>
</feature>
<feature type="helix" evidence="19">
    <location>
        <begin position="62"/>
        <end position="67"/>
    </location>
</feature>
<feature type="strand" evidence="19">
    <location>
        <begin position="72"/>
        <end position="80"/>
    </location>
</feature>
<feature type="strand" evidence="19">
    <location>
        <begin position="83"/>
        <end position="91"/>
    </location>
</feature>
<feature type="helix" evidence="19">
    <location>
        <begin position="93"/>
        <end position="101"/>
    </location>
</feature>
<name>TRX2_YEAST</name>
<proteinExistence type="evidence at protein level"/>